<protein>
    <recommendedName>
        <fullName evidence="1">S-adenosylmethionine:tRNA ribosyltransferase-isomerase</fullName>
        <ecNumber evidence="1">2.4.99.17</ecNumber>
    </recommendedName>
    <alternativeName>
        <fullName evidence="1">Queuosine biosynthesis protein QueA</fullName>
    </alternativeName>
</protein>
<accession>Q0K734</accession>
<proteinExistence type="inferred from homology"/>
<keyword id="KW-0963">Cytoplasm</keyword>
<keyword id="KW-0671">Queuosine biosynthesis</keyword>
<keyword id="KW-1185">Reference proteome</keyword>
<keyword id="KW-0949">S-adenosyl-L-methionine</keyword>
<keyword id="KW-0808">Transferase</keyword>
<gene>
    <name evidence="1" type="primary">queA</name>
    <name type="ordered locus">H16_A3112</name>
</gene>
<evidence type="ECO:0000255" key="1">
    <source>
        <dbReference type="HAMAP-Rule" id="MF_00113"/>
    </source>
</evidence>
<sequence length="352" mass="38587">MLTLSDFDFPLPPELIAQSALPDRSASRLLVVERLAPADTADAVRMVDRAFSDIVDYLRPDDLLVFNDTRVIKARFFGHKPSGGKIEVLVERVVDSHTVLAQVRASKTPTEGSILHLADGAFAVTVGPRVDQFFTLRFPEPALDLIERYGRLPLPPYIRHDPDAYDETRYQTVYARSPGAVAAPTAGLHFDDALFARLNAAGVRRAFLTLHVGAGTFQPVRTENLAEHKMHSEWYAVSADLAQAVRDTRARGGRVIAVGTTSLRALESAAQADGTLAAGSGDTDIFITPGYRFRLVDALITNFHLPKSTLLMLVSALAGVEAIRAAYRHAVEQRYRFFSYGDAMLLTRQPGA</sequence>
<comment type="function">
    <text evidence="1">Transfers and isomerizes the ribose moiety from AdoMet to the 7-aminomethyl group of 7-deazaguanine (preQ1-tRNA) to give epoxyqueuosine (oQ-tRNA).</text>
</comment>
<comment type="catalytic activity">
    <reaction evidence="1">
        <text>7-aminomethyl-7-carbaguanosine(34) in tRNA + S-adenosyl-L-methionine = epoxyqueuosine(34) in tRNA + adenine + L-methionine + 2 H(+)</text>
        <dbReference type="Rhea" id="RHEA:32155"/>
        <dbReference type="Rhea" id="RHEA-COMP:10342"/>
        <dbReference type="Rhea" id="RHEA-COMP:18582"/>
        <dbReference type="ChEBI" id="CHEBI:15378"/>
        <dbReference type="ChEBI" id="CHEBI:16708"/>
        <dbReference type="ChEBI" id="CHEBI:57844"/>
        <dbReference type="ChEBI" id="CHEBI:59789"/>
        <dbReference type="ChEBI" id="CHEBI:82833"/>
        <dbReference type="ChEBI" id="CHEBI:194443"/>
        <dbReference type="EC" id="2.4.99.17"/>
    </reaction>
</comment>
<comment type="pathway">
    <text evidence="1">tRNA modification; tRNA-queuosine biosynthesis.</text>
</comment>
<comment type="subunit">
    <text evidence="1">Monomer.</text>
</comment>
<comment type="subcellular location">
    <subcellularLocation>
        <location evidence="1">Cytoplasm</location>
    </subcellularLocation>
</comment>
<comment type="similarity">
    <text evidence="1">Belongs to the QueA family.</text>
</comment>
<organism>
    <name type="scientific">Cupriavidus necator (strain ATCC 17699 / DSM 428 / KCTC 22496 / NCIMB 10442 / H16 / Stanier 337)</name>
    <name type="common">Ralstonia eutropha</name>
    <dbReference type="NCBI Taxonomy" id="381666"/>
    <lineage>
        <taxon>Bacteria</taxon>
        <taxon>Pseudomonadati</taxon>
        <taxon>Pseudomonadota</taxon>
        <taxon>Betaproteobacteria</taxon>
        <taxon>Burkholderiales</taxon>
        <taxon>Burkholderiaceae</taxon>
        <taxon>Cupriavidus</taxon>
    </lineage>
</organism>
<reference key="1">
    <citation type="journal article" date="2006" name="Nat. Biotechnol.">
        <title>Genome sequence of the bioplastic-producing 'Knallgas' bacterium Ralstonia eutropha H16.</title>
        <authorList>
            <person name="Pohlmann A."/>
            <person name="Fricke W.F."/>
            <person name="Reinecke F."/>
            <person name="Kusian B."/>
            <person name="Liesegang H."/>
            <person name="Cramm R."/>
            <person name="Eitinger T."/>
            <person name="Ewering C."/>
            <person name="Poetter M."/>
            <person name="Schwartz E."/>
            <person name="Strittmatter A."/>
            <person name="Voss I."/>
            <person name="Gottschalk G."/>
            <person name="Steinbuechel A."/>
            <person name="Friedrich B."/>
            <person name="Bowien B."/>
        </authorList>
    </citation>
    <scope>NUCLEOTIDE SEQUENCE [LARGE SCALE GENOMIC DNA]</scope>
    <source>
        <strain>ATCC 17699 / DSM 428 / KCTC 22496 / NCIMB 10442 / H16 / Stanier 337</strain>
    </source>
</reference>
<feature type="chain" id="PRO_1000015252" description="S-adenosylmethionine:tRNA ribosyltransferase-isomerase">
    <location>
        <begin position="1"/>
        <end position="352"/>
    </location>
</feature>
<name>QUEA_CUPNH</name>
<dbReference type="EC" id="2.4.99.17" evidence="1"/>
<dbReference type="EMBL" id="AM260479">
    <property type="protein sequence ID" value="CAJ94187.1"/>
    <property type="molecule type" value="Genomic_DNA"/>
</dbReference>
<dbReference type="RefSeq" id="WP_011615995.1">
    <property type="nucleotide sequence ID" value="NC_008313.1"/>
</dbReference>
<dbReference type="SMR" id="Q0K734"/>
<dbReference type="STRING" id="381666.H16_A3112"/>
<dbReference type="KEGG" id="reh:H16_A3112"/>
<dbReference type="PATRIC" id="fig|381666.6.peg.3517"/>
<dbReference type="eggNOG" id="COG0809">
    <property type="taxonomic scope" value="Bacteria"/>
</dbReference>
<dbReference type="HOGENOM" id="CLU_039110_1_0_4"/>
<dbReference type="OrthoDB" id="9805933at2"/>
<dbReference type="UniPathway" id="UPA00392"/>
<dbReference type="Proteomes" id="UP000008210">
    <property type="component" value="Chromosome 1"/>
</dbReference>
<dbReference type="GO" id="GO:0005737">
    <property type="term" value="C:cytoplasm"/>
    <property type="evidence" value="ECO:0007669"/>
    <property type="project" value="UniProtKB-SubCell"/>
</dbReference>
<dbReference type="GO" id="GO:0051075">
    <property type="term" value="F:S-adenosylmethionine:tRNA ribosyltransferase-isomerase activity"/>
    <property type="evidence" value="ECO:0007669"/>
    <property type="project" value="UniProtKB-EC"/>
</dbReference>
<dbReference type="GO" id="GO:0008616">
    <property type="term" value="P:queuosine biosynthetic process"/>
    <property type="evidence" value="ECO:0007669"/>
    <property type="project" value="UniProtKB-UniRule"/>
</dbReference>
<dbReference type="GO" id="GO:0002099">
    <property type="term" value="P:tRNA wobble guanine modification"/>
    <property type="evidence" value="ECO:0007669"/>
    <property type="project" value="TreeGrafter"/>
</dbReference>
<dbReference type="FunFam" id="3.40.1780.10:FF:000001">
    <property type="entry name" value="S-adenosylmethionine:tRNA ribosyltransferase-isomerase"/>
    <property type="match status" value="1"/>
</dbReference>
<dbReference type="Gene3D" id="2.40.10.240">
    <property type="entry name" value="QueA-like"/>
    <property type="match status" value="1"/>
</dbReference>
<dbReference type="Gene3D" id="3.40.1780.10">
    <property type="entry name" value="QueA-like"/>
    <property type="match status" value="1"/>
</dbReference>
<dbReference type="HAMAP" id="MF_00113">
    <property type="entry name" value="QueA"/>
    <property type="match status" value="1"/>
</dbReference>
<dbReference type="InterPro" id="IPR003699">
    <property type="entry name" value="QueA"/>
</dbReference>
<dbReference type="InterPro" id="IPR042118">
    <property type="entry name" value="QueA_dom1"/>
</dbReference>
<dbReference type="InterPro" id="IPR042119">
    <property type="entry name" value="QueA_dom2"/>
</dbReference>
<dbReference type="InterPro" id="IPR036100">
    <property type="entry name" value="QueA_sf"/>
</dbReference>
<dbReference type="NCBIfam" id="NF001140">
    <property type="entry name" value="PRK00147.1"/>
    <property type="match status" value="1"/>
</dbReference>
<dbReference type="NCBIfam" id="TIGR00113">
    <property type="entry name" value="queA"/>
    <property type="match status" value="1"/>
</dbReference>
<dbReference type="PANTHER" id="PTHR30307">
    <property type="entry name" value="S-ADENOSYLMETHIONINE:TRNA RIBOSYLTRANSFERASE-ISOMERASE"/>
    <property type="match status" value="1"/>
</dbReference>
<dbReference type="PANTHER" id="PTHR30307:SF0">
    <property type="entry name" value="S-ADENOSYLMETHIONINE:TRNA RIBOSYLTRANSFERASE-ISOMERASE"/>
    <property type="match status" value="1"/>
</dbReference>
<dbReference type="Pfam" id="PF02547">
    <property type="entry name" value="Queuosine_synth"/>
    <property type="match status" value="1"/>
</dbReference>
<dbReference type="SUPFAM" id="SSF111337">
    <property type="entry name" value="QueA-like"/>
    <property type="match status" value="1"/>
</dbReference>